<protein>
    <recommendedName>
        <fullName evidence="1">Dihydroorotate dehydrogenase (quinone)</fullName>
        <ecNumber evidence="1">1.3.5.2</ecNumber>
    </recommendedName>
    <alternativeName>
        <fullName evidence="1">DHOdehase</fullName>
        <shortName evidence="1">DHOD</shortName>
        <shortName evidence="1">DHODase</shortName>
    </alternativeName>
    <alternativeName>
        <fullName evidence="1">Dihydroorotate oxidase</fullName>
    </alternativeName>
</protein>
<gene>
    <name evidence="1" type="primary">pyrD</name>
    <name type="ordered locus">NIS_0701</name>
</gene>
<sequence>MDYESIKKILFHFDPETAHHIAESAFELASFFPFILNRLQEKFLVKDPMLSQELFGKTFCNPLGIAAGFDKNATMTKTLHALGFGYVEIGTVTPKPQSGNPKPRLFRYIKQEAIQNAMGFNNDGAEVIKARLQRITPASFPIGVNIGKNKTTPDEQALQDYRFLIKTFHSLSDYLVINISSPNTPGLRDLQNESFIKELFSMAKELTNTPVLLKIAPDMSEDQAVSLCSTAVDAGAAGVIATNTSIDYSLLRGAKDFGGVSGKVIKEKSFAIFKAVAKELFGKTVLISVGGIDSAEEAYRRIRHGATLLQIYTSFIYGGPGLVKSINEGLIEYLKKDGFTHISEAIGIDIR</sequence>
<keyword id="KW-1003">Cell membrane</keyword>
<keyword id="KW-0285">Flavoprotein</keyword>
<keyword id="KW-0288">FMN</keyword>
<keyword id="KW-0472">Membrane</keyword>
<keyword id="KW-0560">Oxidoreductase</keyword>
<keyword id="KW-0665">Pyrimidine biosynthesis</keyword>
<keyword id="KW-1185">Reference proteome</keyword>
<organism>
    <name type="scientific">Nitratiruptor sp. (strain SB155-2)</name>
    <dbReference type="NCBI Taxonomy" id="387092"/>
    <lineage>
        <taxon>Bacteria</taxon>
        <taxon>Pseudomonadati</taxon>
        <taxon>Campylobacterota</taxon>
        <taxon>Epsilonproteobacteria</taxon>
        <taxon>Nautiliales</taxon>
        <taxon>Nitratiruptoraceae</taxon>
        <taxon>Nitratiruptor</taxon>
    </lineage>
</organism>
<reference key="1">
    <citation type="journal article" date="2007" name="Proc. Natl. Acad. Sci. U.S.A.">
        <title>Deep-sea vent epsilon-proteobacterial genomes provide insights into emergence of pathogens.</title>
        <authorList>
            <person name="Nakagawa S."/>
            <person name="Takaki Y."/>
            <person name="Shimamura S."/>
            <person name="Reysenbach A.-L."/>
            <person name="Takai K."/>
            <person name="Horikoshi K."/>
        </authorList>
    </citation>
    <scope>NUCLEOTIDE SEQUENCE [LARGE SCALE GENOMIC DNA]</scope>
    <source>
        <strain>SB155-2</strain>
    </source>
</reference>
<proteinExistence type="inferred from homology"/>
<name>PYRD_NITSB</name>
<comment type="function">
    <text evidence="1">Catalyzes the conversion of dihydroorotate to orotate with quinone as electron acceptor.</text>
</comment>
<comment type="catalytic activity">
    <reaction evidence="1">
        <text>(S)-dihydroorotate + a quinone = orotate + a quinol</text>
        <dbReference type="Rhea" id="RHEA:30187"/>
        <dbReference type="ChEBI" id="CHEBI:24646"/>
        <dbReference type="ChEBI" id="CHEBI:30839"/>
        <dbReference type="ChEBI" id="CHEBI:30864"/>
        <dbReference type="ChEBI" id="CHEBI:132124"/>
        <dbReference type="EC" id="1.3.5.2"/>
    </reaction>
</comment>
<comment type="cofactor">
    <cofactor evidence="1">
        <name>FMN</name>
        <dbReference type="ChEBI" id="CHEBI:58210"/>
    </cofactor>
    <text evidence="1">Binds 1 FMN per subunit.</text>
</comment>
<comment type="pathway">
    <text evidence="1">Pyrimidine metabolism; UMP biosynthesis via de novo pathway; orotate from (S)-dihydroorotate (quinone route): step 1/1.</text>
</comment>
<comment type="subunit">
    <text evidence="1">Monomer.</text>
</comment>
<comment type="subcellular location">
    <subcellularLocation>
        <location evidence="1">Cell membrane</location>
        <topology evidence="1">Peripheral membrane protein</topology>
    </subcellularLocation>
</comment>
<comment type="similarity">
    <text evidence="1">Belongs to the dihydroorotate dehydrogenase family. Type 2 subfamily.</text>
</comment>
<evidence type="ECO:0000255" key="1">
    <source>
        <dbReference type="HAMAP-Rule" id="MF_00225"/>
    </source>
</evidence>
<accession>A6Q2V6</accession>
<dbReference type="EC" id="1.3.5.2" evidence="1"/>
<dbReference type="EMBL" id="AP009178">
    <property type="protein sequence ID" value="BAF69815.1"/>
    <property type="molecule type" value="Genomic_DNA"/>
</dbReference>
<dbReference type="RefSeq" id="WP_012082078.1">
    <property type="nucleotide sequence ID" value="NC_009662.1"/>
</dbReference>
<dbReference type="SMR" id="A6Q2V6"/>
<dbReference type="FunCoup" id="A6Q2V6">
    <property type="interactions" value="391"/>
</dbReference>
<dbReference type="STRING" id="387092.NIS_0701"/>
<dbReference type="KEGG" id="nis:NIS_0701"/>
<dbReference type="eggNOG" id="COG0167">
    <property type="taxonomic scope" value="Bacteria"/>
</dbReference>
<dbReference type="HOGENOM" id="CLU_013640_2_0_7"/>
<dbReference type="InParanoid" id="A6Q2V6"/>
<dbReference type="UniPathway" id="UPA00070">
    <property type="reaction ID" value="UER00946"/>
</dbReference>
<dbReference type="Proteomes" id="UP000001118">
    <property type="component" value="Chromosome"/>
</dbReference>
<dbReference type="GO" id="GO:0005737">
    <property type="term" value="C:cytoplasm"/>
    <property type="evidence" value="ECO:0007669"/>
    <property type="project" value="InterPro"/>
</dbReference>
<dbReference type="GO" id="GO:0005886">
    <property type="term" value="C:plasma membrane"/>
    <property type="evidence" value="ECO:0007669"/>
    <property type="project" value="UniProtKB-SubCell"/>
</dbReference>
<dbReference type="GO" id="GO:0106430">
    <property type="term" value="F:dihydroorotate dehydrogenase (quinone) activity"/>
    <property type="evidence" value="ECO:0007669"/>
    <property type="project" value="UniProtKB-EC"/>
</dbReference>
<dbReference type="GO" id="GO:0006207">
    <property type="term" value="P:'de novo' pyrimidine nucleobase biosynthetic process"/>
    <property type="evidence" value="ECO:0007669"/>
    <property type="project" value="InterPro"/>
</dbReference>
<dbReference type="GO" id="GO:0044205">
    <property type="term" value="P:'de novo' UMP biosynthetic process"/>
    <property type="evidence" value="ECO:0007669"/>
    <property type="project" value="UniProtKB-UniRule"/>
</dbReference>
<dbReference type="CDD" id="cd04738">
    <property type="entry name" value="DHOD_2_like"/>
    <property type="match status" value="1"/>
</dbReference>
<dbReference type="Gene3D" id="3.20.20.70">
    <property type="entry name" value="Aldolase class I"/>
    <property type="match status" value="1"/>
</dbReference>
<dbReference type="HAMAP" id="MF_00225">
    <property type="entry name" value="DHO_dh_type2"/>
    <property type="match status" value="1"/>
</dbReference>
<dbReference type="InterPro" id="IPR013785">
    <property type="entry name" value="Aldolase_TIM"/>
</dbReference>
<dbReference type="InterPro" id="IPR050074">
    <property type="entry name" value="DHO_dehydrogenase"/>
</dbReference>
<dbReference type="InterPro" id="IPR012135">
    <property type="entry name" value="Dihydroorotate_DH_1_2"/>
</dbReference>
<dbReference type="InterPro" id="IPR005719">
    <property type="entry name" value="Dihydroorotate_DH_2"/>
</dbReference>
<dbReference type="InterPro" id="IPR005720">
    <property type="entry name" value="Dihydroorotate_DH_cat"/>
</dbReference>
<dbReference type="InterPro" id="IPR001295">
    <property type="entry name" value="Dihydroorotate_DH_CS"/>
</dbReference>
<dbReference type="NCBIfam" id="NF003645">
    <property type="entry name" value="PRK05286.1-2"/>
    <property type="match status" value="1"/>
</dbReference>
<dbReference type="NCBIfam" id="NF003649">
    <property type="entry name" value="PRK05286.2-2"/>
    <property type="match status" value="1"/>
</dbReference>
<dbReference type="NCBIfam" id="NF003652">
    <property type="entry name" value="PRK05286.2-5"/>
    <property type="match status" value="1"/>
</dbReference>
<dbReference type="NCBIfam" id="TIGR01036">
    <property type="entry name" value="pyrD_sub2"/>
    <property type="match status" value="1"/>
</dbReference>
<dbReference type="PANTHER" id="PTHR48109:SF4">
    <property type="entry name" value="DIHYDROOROTATE DEHYDROGENASE (QUINONE), MITOCHONDRIAL"/>
    <property type="match status" value="1"/>
</dbReference>
<dbReference type="PANTHER" id="PTHR48109">
    <property type="entry name" value="DIHYDROOROTATE DEHYDROGENASE (QUINONE), MITOCHONDRIAL-RELATED"/>
    <property type="match status" value="1"/>
</dbReference>
<dbReference type="Pfam" id="PF01180">
    <property type="entry name" value="DHO_dh"/>
    <property type="match status" value="1"/>
</dbReference>
<dbReference type="PIRSF" id="PIRSF000164">
    <property type="entry name" value="DHO_oxidase"/>
    <property type="match status" value="1"/>
</dbReference>
<dbReference type="SUPFAM" id="SSF51395">
    <property type="entry name" value="FMN-linked oxidoreductases"/>
    <property type="match status" value="1"/>
</dbReference>
<dbReference type="PROSITE" id="PS00911">
    <property type="entry name" value="DHODEHASE_1"/>
    <property type="match status" value="1"/>
</dbReference>
<dbReference type="PROSITE" id="PS00912">
    <property type="entry name" value="DHODEHASE_2"/>
    <property type="match status" value="1"/>
</dbReference>
<feature type="chain" id="PRO_1000024193" description="Dihydroorotate dehydrogenase (quinone)">
    <location>
        <begin position="1"/>
        <end position="351"/>
    </location>
</feature>
<feature type="active site" description="Nucleophile" evidence="1">
    <location>
        <position position="181"/>
    </location>
</feature>
<feature type="binding site" evidence="1">
    <location>
        <begin position="67"/>
        <end position="71"/>
    </location>
    <ligand>
        <name>FMN</name>
        <dbReference type="ChEBI" id="CHEBI:58210"/>
    </ligand>
</feature>
<feature type="binding site" evidence="1">
    <location>
        <position position="71"/>
    </location>
    <ligand>
        <name>substrate</name>
    </ligand>
</feature>
<feature type="binding site" evidence="1">
    <location>
        <position position="91"/>
    </location>
    <ligand>
        <name>FMN</name>
        <dbReference type="ChEBI" id="CHEBI:58210"/>
    </ligand>
</feature>
<feature type="binding site" evidence="1">
    <location>
        <begin position="116"/>
        <end position="120"/>
    </location>
    <ligand>
        <name>substrate</name>
    </ligand>
</feature>
<feature type="binding site" evidence="1">
    <location>
        <position position="145"/>
    </location>
    <ligand>
        <name>FMN</name>
        <dbReference type="ChEBI" id="CHEBI:58210"/>
    </ligand>
</feature>
<feature type="binding site" evidence="1">
    <location>
        <position position="178"/>
    </location>
    <ligand>
        <name>FMN</name>
        <dbReference type="ChEBI" id="CHEBI:58210"/>
    </ligand>
</feature>
<feature type="binding site" evidence="1">
    <location>
        <position position="178"/>
    </location>
    <ligand>
        <name>substrate</name>
    </ligand>
</feature>
<feature type="binding site" evidence="1">
    <location>
        <position position="183"/>
    </location>
    <ligand>
        <name>substrate</name>
    </ligand>
</feature>
<feature type="binding site" evidence="1">
    <location>
        <position position="214"/>
    </location>
    <ligand>
        <name>FMN</name>
        <dbReference type="ChEBI" id="CHEBI:58210"/>
    </ligand>
</feature>
<feature type="binding site" evidence="1">
    <location>
        <position position="242"/>
    </location>
    <ligand>
        <name>FMN</name>
        <dbReference type="ChEBI" id="CHEBI:58210"/>
    </ligand>
</feature>
<feature type="binding site" evidence="1">
    <location>
        <begin position="243"/>
        <end position="244"/>
    </location>
    <ligand>
        <name>substrate</name>
    </ligand>
</feature>
<feature type="binding site" evidence="1">
    <location>
        <position position="262"/>
    </location>
    <ligand>
        <name>FMN</name>
        <dbReference type="ChEBI" id="CHEBI:58210"/>
    </ligand>
</feature>
<feature type="binding site" evidence="1">
    <location>
        <position position="291"/>
    </location>
    <ligand>
        <name>FMN</name>
        <dbReference type="ChEBI" id="CHEBI:58210"/>
    </ligand>
</feature>
<feature type="binding site" evidence="1">
    <location>
        <begin position="312"/>
        <end position="313"/>
    </location>
    <ligand>
        <name>FMN</name>
        <dbReference type="ChEBI" id="CHEBI:58210"/>
    </ligand>
</feature>